<protein>
    <recommendedName>
        <fullName>Glucagon-2</fullName>
    </recommendedName>
    <alternativeName>
        <fullName>Glucagon II</fullName>
    </alternativeName>
    <component>
        <recommendedName>
            <fullName>Glicentin-related polypeptide 2</fullName>
            <shortName>GRPP 2</shortName>
        </recommendedName>
    </component>
    <component>
        <recommendedName>
            <fullName>Glucagon-2</fullName>
        </recommendedName>
    </component>
    <component>
        <recommendedName>
            <fullName>Glucagon-like peptide 1-2</fullName>
            <shortName>GLP 1-2</shortName>
        </recommendedName>
    </component>
    <component>
        <recommendedName>
            <fullName>Glucagon-like peptide 2</fullName>
            <shortName>GLP 2</shortName>
        </recommendedName>
    </component>
</protein>
<keyword id="KW-0025">Alternative splicing</keyword>
<keyword id="KW-0165">Cleavage on pair of basic residues</keyword>
<keyword id="KW-0372">Hormone</keyword>
<keyword id="KW-0964">Secreted</keyword>
<keyword id="KW-0732">Signal</keyword>
<organism>
    <name type="scientific">Oncorhynchus mykiss</name>
    <name type="common">Rainbow trout</name>
    <name type="synonym">Salmo gairdneri</name>
    <dbReference type="NCBI Taxonomy" id="8022"/>
    <lineage>
        <taxon>Eukaryota</taxon>
        <taxon>Metazoa</taxon>
        <taxon>Chordata</taxon>
        <taxon>Craniata</taxon>
        <taxon>Vertebrata</taxon>
        <taxon>Euteleostomi</taxon>
        <taxon>Actinopterygii</taxon>
        <taxon>Neopterygii</taxon>
        <taxon>Teleostei</taxon>
        <taxon>Protacanthopterygii</taxon>
        <taxon>Salmoniformes</taxon>
        <taxon>Salmonidae</taxon>
        <taxon>Salmoninae</taxon>
        <taxon>Oncorhynchus</taxon>
    </lineage>
</organism>
<feature type="signal peptide" evidence="2">
    <location>
        <begin position="1"/>
        <end position="21"/>
    </location>
</feature>
<feature type="peptide" id="PRO_0000011364" description="Glicentin-related polypeptide 2">
    <location>
        <begin position="22"/>
        <end position="49"/>
    </location>
</feature>
<feature type="peptide" id="PRO_0000011365" description="Glucagon-2">
    <location>
        <begin position="52"/>
        <end position="80"/>
    </location>
</feature>
<feature type="propeptide" id="PRO_0000011366">
    <location>
        <begin position="83"/>
        <end position="87"/>
    </location>
</feature>
<feature type="peptide" id="PRO_0000011367" description="Glucagon-like peptide 1-2">
    <location>
        <begin position="90"/>
        <end position="120"/>
    </location>
</feature>
<feature type="propeptide" id="PRO_0000011368">
    <location>
        <begin position="123"/>
        <end position="134"/>
    </location>
</feature>
<feature type="peptide" id="PRO_0000011369" description="Glucagon-like peptide 2">
    <location>
        <begin position="137"/>
        <end position="169"/>
    </location>
</feature>
<feature type="propeptide" id="PRO_0000011370">
    <location>
        <begin position="171"/>
        <end position="178"/>
    </location>
</feature>
<feature type="splice variant" id="VSP_050471" description="In isoform Pancreatic." evidence="3">
    <location>
        <begin position="124"/>
        <end position="178"/>
    </location>
</feature>
<proteinExistence type="evidence at transcript level"/>
<reference key="1">
    <citation type="journal article" date="1995" name="Mol. Endocrinol.">
        <title>Trout and chicken proglucagon: alternative splicing generates mRNA transcripts encoding glucagon-like peptide 2.</title>
        <authorList>
            <person name="Irwin D.M."/>
            <person name="Wong J."/>
        </authorList>
    </citation>
    <scope>NUCLEOTIDE SEQUENCE [GENOMIC DNA / MRNA]</scope>
    <scope>ALTERNATIVE SPLICING</scope>
    <source>
        <tissue>Distal small intestine</tissue>
        <tissue>Pancreas</tissue>
    </source>
</reference>
<evidence type="ECO:0000250" key="1"/>
<evidence type="ECO:0000255" key="2"/>
<evidence type="ECO:0000305" key="3"/>
<accession>Q91189</accession>
<accession>Q92168</accession>
<sequence length="178" mass="19998">MFGIHSLAGVLLLVIVQSQLASPLQEAEDNSSLETADSLLEDLRGVPNMKRQSEGTFSNYYSKYQEERMARDFLHWLMNSKRSGAPSKRHADGTYTSDVSTYLQDQAAKDFVSWLKSGPARRESAEESMNGPMSRRHVDGSFTSDVNKVLDSLAAKEYLLWVMTSKTSGKSNKRQEDH</sequence>
<comment type="function">
    <text evidence="1">Promotes hydrolysis of glycogen and lipids, and raises the blood sugar level.</text>
</comment>
<comment type="subcellular location">
    <subcellularLocation>
        <location>Secreted</location>
    </subcellularLocation>
</comment>
<comment type="alternative products">
    <event type="alternative splicing"/>
    <isoform>
        <id>Q91189-1</id>
        <name>Intestinal</name>
        <sequence type="displayed"/>
    </isoform>
    <isoform>
        <id>Q91189-2</id>
        <name>Pancreatic</name>
        <sequence type="described" ref="VSP_050471"/>
    </isoform>
</comment>
<comment type="induction">
    <text>Produced in the A cells of the islets of Langerhans in response to a drop in blood sugar concentration.</text>
</comment>
<comment type="similarity">
    <text evidence="3">Belongs to the glucagon family.</text>
</comment>
<name>GLUC2_ONCMY</name>
<gene>
    <name type="primary">gcg2</name>
</gene>
<dbReference type="EMBL" id="U19914">
    <property type="protein sequence ID" value="AAC59668.1"/>
    <property type="molecule type" value="mRNA"/>
</dbReference>
<dbReference type="EMBL" id="U19916">
    <property type="protein sequence ID" value="AAC60210.1"/>
    <property type="molecule type" value="Genomic_DNA"/>
</dbReference>
<dbReference type="EMBL" id="U19915">
    <property type="protein sequence ID" value="AAC60210.1"/>
    <property type="status" value="JOINED"/>
    <property type="molecule type" value="Genomic_DNA"/>
</dbReference>
<dbReference type="EMBL" id="U19915">
    <property type="protein sequence ID" value="AAC60209.1"/>
    <property type="molecule type" value="Genomic_DNA"/>
</dbReference>
<dbReference type="PIR" id="I51057">
    <property type="entry name" value="I51057"/>
</dbReference>
<dbReference type="RefSeq" id="NP_001118172.1">
    <molecule id="Q91189-1"/>
    <property type="nucleotide sequence ID" value="NM_001124700.1"/>
</dbReference>
<dbReference type="SMR" id="Q91189"/>
<dbReference type="GeneID" id="100136748"/>
<dbReference type="KEGG" id="omy:100136748"/>
<dbReference type="CTD" id="100136748"/>
<dbReference type="OrthoDB" id="9904258at2759"/>
<dbReference type="Proteomes" id="UP000694395">
    <property type="component" value="Unplaced"/>
</dbReference>
<dbReference type="GO" id="GO:0005576">
    <property type="term" value="C:extracellular region"/>
    <property type="evidence" value="ECO:0007669"/>
    <property type="project" value="UniProtKB-SubCell"/>
</dbReference>
<dbReference type="GO" id="GO:0031769">
    <property type="term" value="F:glucagon receptor binding"/>
    <property type="evidence" value="ECO:0007669"/>
    <property type="project" value="TreeGrafter"/>
</dbReference>
<dbReference type="GO" id="GO:0005179">
    <property type="term" value="F:hormone activity"/>
    <property type="evidence" value="ECO:0007669"/>
    <property type="project" value="UniProtKB-KW"/>
</dbReference>
<dbReference type="GO" id="GO:0042594">
    <property type="term" value="P:response to starvation"/>
    <property type="evidence" value="ECO:0007669"/>
    <property type="project" value="TreeGrafter"/>
</dbReference>
<dbReference type="Gene3D" id="6.10.250.590">
    <property type="match status" value="3"/>
</dbReference>
<dbReference type="InterPro" id="IPR015550">
    <property type="entry name" value="Glucagon"/>
</dbReference>
<dbReference type="InterPro" id="IPR000532">
    <property type="entry name" value="Glucagon_GIP_secretin_VIP"/>
</dbReference>
<dbReference type="InterPro" id="IPR006162">
    <property type="entry name" value="Ppantetheine_attach_site"/>
</dbReference>
<dbReference type="PANTHER" id="PTHR11418">
    <property type="entry name" value="GLUCAGON"/>
    <property type="match status" value="1"/>
</dbReference>
<dbReference type="PANTHER" id="PTHR11418:SF0">
    <property type="entry name" value="PRO-GLUCAGON"/>
    <property type="match status" value="1"/>
</dbReference>
<dbReference type="Pfam" id="PF00123">
    <property type="entry name" value="Hormone_2"/>
    <property type="match status" value="3"/>
</dbReference>
<dbReference type="SMART" id="SM00070">
    <property type="entry name" value="GLUCA"/>
    <property type="match status" value="3"/>
</dbReference>
<dbReference type="PROSITE" id="PS00260">
    <property type="entry name" value="GLUCAGON"/>
    <property type="match status" value="2"/>
</dbReference>